<evidence type="ECO:0000255" key="1">
    <source>
        <dbReference type="HAMAP-Rule" id="MF_00011"/>
    </source>
</evidence>
<dbReference type="EC" id="6.3.4.4" evidence="1"/>
<dbReference type="EMBL" id="AM933172">
    <property type="protein sequence ID" value="CAR35692.1"/>
    <property type="molecule type" value="Genomic_DNA"/>
</dbReference>
<dbReference type="RefSeq" id="WP_000527976.1">
    <property type="nucleotide sequence ID" value="NC_011294.1"/>
</dbReference>
<dbReference type="SMR" id="B5R0P3"/>
<dbReference type="KEGG" id="set:SEN4132"/>
<dbReference type="HOGENOM" id="CLU_029848_0_0_6"/>
<dbReference type="UniPathway" id="UPA00075">
    <property type="reaction ID" value="UER00335"/>
</dbReference>
<dbReference type="Proteomes" id="UP000000613">
    <property type="component" value="Chromosome"/>
</dbReference>
<dbReference type="GO" id="GO:0005737">
    <property type="term" value="C:cytoplasm"/>
    <property type="evidence" value="ECO:0007669"/>
    <property type="project" value="UniProtKB-SubCell"/>
</dbReference>
<dbReference type="GO" id="GO:0004019">
    <property type="term" value="F:adenylosuccinate synthase activity"/>
    <property type="evidence" value="ECO:0007669"/>
    <property type="project" value="UniProtKB-UniRule"/>
</dbReference>
<dbReference type="GO" id="GO:0005525">
    <property type="term" value="F:GTP binding"/>
    <property type="evidence" value="ECO:0007669"/>
    <property type="project" value="UniProtKB-UniRule"/>
</dbReference>
<dbReference type="GO" id="GO:0000287">
    <property type="term" value="F:magnesium ion binding"/>
    <property type="evidence" value="ECO:0007669"/>
    <property type="project" value="UniProtKB-UniRule"/>
</dbReference>
<dbReference type="GO" id="GO:0044208">
    <property type="term" value="P:'de novo' AMP biosynthetic process"/>
    <property type="evidence" value="ECO:0007669"/>
    <property type="project" value="UniProtKB-UniRule"/>
</dbReference>
<dbReference type="GO" id="GO:0046040">
    <property type="term" value="P:IMP metabolic process"/>
    <property type="evidence" value="ECO:0007669"/>
    <property type="project" value="TreeGrafter"/>
</dbReference>
<dbReference type="CDD" id="cd03108">
    <property type="entry name" value="AdSS"/>
    <property type="match status" value="1"/>
</dbReference>
<dbReference type="FunFam" id="1.10.300.10:FF:000001">
    <property type="entry name" value="Adenylosuccinate synthetase"/>
    <property type="match status" value="1"/>
</dbReference>
<dbReference type="FunFam" id="3.90.170.10:FF:000001">
    <property type="entry name" value="Adenylosuccinate synthetase"/>
    <property type="match status" value="1"/>
</dbReference>
<dbReference type="Gene3D" id="3.40.440.10">
    <property type="entry name" value="Adenylosuccinate Synthetase, subunit A, domain 1"/>
    <property type="match status" value="1"/>
</dbReference>
<dbReference type="Gene3D" id="1.10.300.10">
    <property type="entry name" value="Adenylosuccinate Synthetase, subunit A, domain 2"/>
    <property type="match status" value="1"/>
</dbReference>
<dbReference type="Gene3D" id="3.90.170.10">
    <property type="entry name" value="Adenylosuccinate Synthetase, subunit A, domain 3"/>
    <property type="match status" value="1"/>
</dbReference>
<dbReference type="HAMAP" id="MF_00011">
    <property type="entry name" value="Adenylosucc_synth"/>
    <property type="match status" value="1"/>
</dbReference>
<dbReference type="InterPro" id="IPR018220">
    <property type="entry name" value="Adenylosuccin_syn_GTP-bd"/>
</dbReference>
<dbReference type="InterPro" id="IPR033128">
    <property type="entry name" value="Adenylosuccin_syn_Lys_AS"/>
</dbReference>
<dbReference type="InterPro" id="IPR042109">
    <property type="entry name" value="Adenylosuccinate_synth_dom1"/>
</dbReference>
<dbReference type="InterPro" id="IPR042110">
    <property type="entry name" value="Adenylosuccinate_synth_dom2"/>
</dbReference>
<dbReference type="InterPro" id="IPR042111">
    <property type="entry name" value="Adenylosuccinate_synth_dom3"/>
</dbReference>
<dbReference type="InterPro" id="IPR001114">
    <property type="entry name" value="Adenylosuccinate_synthetase"/>
</dbReference>
<dbReference type="InterPro" id="IPR027417">
    <property type="entry name" value="P-loop_NTPase"/>
</dbReference>
<dbReference type="NCBIfam" id="NF002223">
    <property type="entry name" value="PRK01117.1"/>
    <property type="match status" value="1"/>
</dbReference>
<dbReference type="NCBIfam" id="TIGR00184">
    <property type="entry name" value="purA"/>
    <property type="match status" value="1"/>
</dbReference>
<dbReference type="PANTHER" id="PTHR11846">
    <property type="entry name" value="ADENYLOSUCCINATE SYNTHETASE"/>
    <property type="match status" value="1"/>
</dbReference>
<dbReference type="PANTHER" id="PTHR11846:SF0">
    <property type="entry name" value="ADENYLOSUCCINATE SYNTHETASE"/>
    <property type="match status" value="1"/>
</dbReference>
<dbReference type="Pfam" id="PF00709">
    <property type="entry name" value="Adenylsucc_synt"/>
    <property type="match status" value="1"/>
</dbReference>
<dbReference type="SMART" id="SM00788">
    <property type="entry name" value="Adenylsucc_synt"/>
    <property type="match status" value="1"/>
</dbReference>
<dbReference type="SUPFAM" id="SSF52540">
    <property type="entry name" value="P-loop containing nucleoside triphosphate hydrolases"/>
    <property type="match status" value="1"/>
</dbReference>
<dbReference type="PROSITE" id="PS01266">
    <property type="entry name" value="ADENYLOSUCCIN_SYN_1"/>
    <property type="match status" value="1"/>
</dbReference>
<dbReference type="PROSITE" id="PS00513">
    <property type="entry name" value="ADENYLOSUCCIN_SYN_2"/>
    <property type="match status" value="1"/>
</dbReference>
<protein>
    <recommendedName>
        <fullName evidence="1">Adenylosuccinate synthetase</fullName>
        <shortName evidence="1">AMPSase</shortName>
        <shortName evidence="1">AdSS</shortName>
        <ecNumber evidence="1">6.3.4.4</ecNumber>
    </recommendedName>
    <alternativeName>
        <fullName evidence="1">IMP--aspartate ligase</fullName>
    </alternativeName>
</protein>
<name>PURA_SALEP</name>
<proteinExistence type="inferred from homology"/>
<comment type="function">
    <text evidence="1">Plays an important role in the de novo pathway of purine nucleotide biosynthesis. Catalyzes the first committed step in the biosynthesis of AMP from IMP.</text>
</comment>
<comment type="catalytic activity">
    <reaction evidence="1">
        <text>IMP + L-aspartate + GTP = N(6)-(1,2-dicarboxyethyl)-AMP + GDP + phosphate + 2 H(+)</text>
        <dbReference type="Rhea" id="RHEA:15753"/>
        <dbReference type="ChEBI" id="CHEBI:15378"/>
        <dbReference type="ChEBI" id="CHEBI:29991"/>
        <dbReference type="ChEBI" id="CHEBI:37565"/>
        <dbReference type="ChEBI" id="CHEBI:43474"/>
        <dbReference type="ChEBI" id="CHEBI:57567"/>
        <dbReference type="ChEBI" id="CHEBI:58053"/>
        <dbReference type="ChEBI" id="CHEBI:58189"/>
        <dbReference type="EC" id="6.3.4.4"/>
    </reaction>
</comment>
<comment type="cofactor">
    <cofactor evidence="1">
        <name>Mg(2+)</name>
        <dbReference type="ChEBI" id="CHEBI:18420"/>
    </cofactor>
    <text evidence="1">Binds 1 Mg(2+) ion per subunit.</text>
</comment>
<comment type="pathway">
    <text evidence="1">Purine metabolism; AMP biosynthesis via de novo pathway; AMP from IMP: step 1/2.</text>
</comment>
<comment type="subunit">
    <text evidence="1">Homodimer.</text>
</comment>
<comment type="subcellular location">
    <subcellularLocation>
        <location evidence="1">Cytoplasm</location>
    </subcellularLocation>
</comment>
<comment type="similarity">
    <text evidence="1">Belongs to the adenylosuccinate synthetase family.</text>
</comment>
<accession>B5R0P3</accession>
<gene>
    <name evidence="1" type="primary">purA</name>
    <name type="ordered locus">SEN4132</name>
</gene>
<feature type="chain" id="PRO_1000089334" description="Adenylosuccinate synthetase">
    <location>
        <begin position="1"/>
        <end position="432"/>
    </location>
</feature>
<feature type="active site" description="Proton acceptor" evidence="1">
    <location>
        <position position="14"/>
    </location>
</feature>
<feature type="active site" description="Proton donor" evidence="1">
    <location>
        <position position="42"/>
    </location>
</feature>
<feature type="binding site" evidence="1">
    <location>
        <begin position="13"/>
        <end position="19"/>
    </location>
    <ligand>
        <name>GTP</name>
        <dbReference type="ChEBI" id="CHEBI:37565"/>
    </ligand>
</feature>
<feature type="binding site" description="in other chain" evidence="1">
    <location>
        <begin position="14"/>
        <end position="17"/>
    </location>
    <ligand>
        <name>IMP</name>
        <dbReference type="ChEBI" id="CHEBI:58053"/>
        <note>ligand shared between dimeric partners</note>
    </ligand>
</feature>
<feature type="binding site" evidence="1">
    <location>
        <position position="14"/>
    </location>
    <ligand>
        <name>Mg(2+)</name>
        <dbReference type="ChEBI" id="CHEBI:18420"/>
    </ligand>
</feature>
<feature type="binding site" description="in other chain" evidence="1">
    <location>
        <begin position="39"/>
        <end position="42"/>
    </location>
    <ligand>
        <name>IMP</name>
        <dbReference type="ChEBI" id="CHEBI:58053"/>
        <note>ligand shared between dimeric partners</note>
    </ligand>
</feature>
<feature type="binding site" evidence="1">
    <location>
        <begin position="41"/>
        <end position="43"/>
    </location>
    <ligand>
        <name>GTP</name>
        <dbReference type="ChEBI" id="CHEBI:37565"/>
    </ligand>
</feature>
<feature type="binding site" evidence="1">
    <location>
        <position position="41"/>
    </location>
    <ligand>
        <name>Mg(2+)</name>
        <dbReference type="ChEBI" id="CHEBI:18420"/>
    </ligand>
</feature>
<feature type="binding site" description="in other chain" evidence="1">
    <location>
        <position position="130"/>
    </location>
    <ligand>
        <name>IMP</name>
        <dbReference type="ChEBI" id="CHEBI:58053"/>
        <note>ligand shared between dimeric partners</note>
    </ligand>
</feature>
<feature type="binding site" evidence="1">
    <location>
        <position position="144"/>
    </location>
    <ligand>
        <name>IMP</name>
        <dbReference type="ChEBI" id="CHEBI:58053"/>
        <note>ligand shared between dimeric partners</note>
    </ligand>
</feature>
<feature type="binding site" description="in other chain" evidence="1">
    <location>
        <position position="225"/>
    </location>
    <ligand>
        <name>IMP</name>
        <dbReference type="ChEBI" id="CHEBI:58053"/>
        <note>ligand shared between dimeric partners</note>
    </ligand>
</feature>
<feature type="binding site" description="in other chain" evidence="1">
    <location>
        <position position="240"/>
    </location>
    <ligand>
        <name>IMP</name>
        <dbReference type="ChEBI" id="CHEBI:58053"/>
        <note>ligand shared between dimeric partners</note>
    </ligand>
</feature>
<feature type="binding site" evidence="1">
    <location>
        <begin position="300"/>
        <end position="306"/>
    </location>
    <ligand>
        <name>substrate</name>
    </ligand>
</feature>
<feature type="binding site" description="in other chain" evidence="1">
    <location>
        <position position="304"/>
    </location>
    <ligand>
        <name>IMP</name>
        <dbReference type="ChEBI" id="CHEBI:58053"/>
        <note>ligand shared between dimeric partners</note>
    </ligand>
</feature>
<feature type="binding site" evidence="1">
    <location>
        <position position="306"/>
    </location>
    <ligand>
        <name>GTP</name>
        <dbReference type="ChEBI" id="CHEBI:37565"/>
    </ligand>
</feature>
<feature type="binding site" evidence="1">
    <location>
        <begin position="332"/>
        <end position="334"/>
    </location>
    <ligand>
        <name>GTP</name>
        <dbReference type="ChEBI" id="CHEBI:37565"/>
    </ligand>
</feature>
<feature type="binding site" evidence="1">
    <location>
        <begin position="415"/>
        <end position="417"/>
    </location>
    <ligand>
        <name>GTP</name>
        <dbReference type="ChEBI" id="CHEBI:37565"/>
    </ligand>
</feature>
<keyword id="KW-0963">Cytoplasm</keyword>
<keyword id="KW-0342">GTP-binding</keyword>
<keyword id="KW-0436">Ligase</keyword>
<keyword id="KW-0460">Magnesium</keyword>
<keyword id="KW-0479">Metal-binding</keyword>
<keyword id="KW-0547">Nucleotide-binding</keyword>
<keyword id="KW-0658">Purine biosynthesis</keyword>
<sequence length="432" mass="47405">MGNNVVVLGTQWGDEGKGKIVDLLTERAKYVVRYQGGHNAGHTLVINGEKTVLHLIPSGILRENVTSIIGNGVVLSPSALMKEMKELEDRGIPVRERLLLSEACPLILDYHVALDNAREKARGAKAIGTTGRGIGPAYEDKVARRGLRVGDLFDKETFAEKLKEVMEYHNFQLVNYYKVEAVDYQKVLDDTMAVADILTSMVVDVSDLLDQARQRGDFVMFEGAQGTLLDIDHGTYPYVTSSNTTAGGVATGSGLGPRYVDYVLGILKAYSTRVGAGPFPTELFDETGEFLCKQGNEYGATTGRRRRTGWLDTVAVRRAVQLNSLSGFCLTKLDVLDGLKEVKLCVAYRMPDGREVTTTPLAADDWKGVEPIYETMPGWSESTFGVKDRSGLPQAALNYIKRIEELTGVPIDIISTGPDRTETMILRDPFDA</sequence>
<reference key="1">
    <citation type="journal article" date="2008" name="Genome Res.">
        <title>Comparative genome analysis of Salmonella enteritidis PT4 and Salmonella gallinarum 287/91 provides insights into evolutionary and host adaptation pathways.</title>
        <authorList>
            <person name="Thomson N.R."/>
            <person name="Clayton D.J."/>
            <person name="Windhorst D."/>
            <person name="Vernikos G."/>
            <person name="Davidson S."/>
            <person name="Churcher C."/>
            <person name="Quail M.A."/>
            <person name="Stevens M."/>
            <person name="Jones M.A."/>
            <person name="Watson M."/>
            <person name="Barron A."/>
            <person name="Layton A."/>
            <person name="Pickard D."/>
            <person name="Kingsley R.A."/>
            <person name="Bignell A."/>
            <person name="Clark L."/>
            <person name="Harris B."/>
            <person name="Ormond D."/>
            <person name="Abdellah Z."/>
            <person name="Brooks K."/>
            <person name="Cherevach I."/>
            <person name="Chillingworth T."/>
            <person name="Woodward J."/>
            <person name="Norberczak H."/>
            <person name="Lord A."/>
            <person name="Arrowsmith C."/>
            <person name="Jagels K."/>
            <person name="Moule S."/>
            <person name="Mungall K."/>
            <person name="Saunders M."/>
            <person name="Whitehead S."/>
            <person name="Chabalgoity J.A."/>
            <person name="Maskell D."/>
            <person name="Humphreys T."/>
            <person name="Roberts M."/>
            <person name="Barrow P.A."/>
            <person name="Dougan G."/>
            <person name="Parkhill J."/>
        </authorList>
    </citation>
    <scope>NUCLEOTIDE SEQUENCE [LARGE SCALE GENOMIC DNA]</scope>
    <source>
        <strain>P125109</strain>
    </source>
</reference>
<organism>
    <name type="scientific">Salmonella enteritidis PT4 (strain P125109)</name>
    <dbReference type="NCBI Taxonomy" id="550537"/>
    <lineage>
        <taxon>Bacteria</taxon>
        <taxon>Pseudomonadati</taxon>
        <taxon>Pseudomonadota</taxon>
        <taxon>Gammaproteobacteria</taxon>
        <taxon>Enterobacterales</taxon>
        <taxon>Enterobacteriaceae</taxon>
        <taxon>Salmonella</taxon>
    </lineage>
</organism>